<gene>
    <name evidence="7" type="primary">penK</name>
</gene>
<sequence length="420" mass="46553">MGSIDDSFSLPAPSDEHGFEALGTQLVEAMSTYAKCLKAENLPPPSLYPMFSASTSVACPEGIEAKRKIVELSQLICAATMDPELNLLISSLQFHFCSSLKVAIDLRIYEYIPVDGTVSLSQLAELAGRIMRVLTNKHVFMQIQPGHYAHTRMSSLLLKTKAKDLLSHRLDDVFRSASREADALAQAGYREPDRRAAKGFNLAFNTDKNFWEYIATDDPKRGARFARAMHAVNINSLDVIPRLYPFDSLATDGSLIVDVGGGQGQVAKRILEYYPNSGLRCIVQDGYVTNGSTAGPAAVEMHRHDFFEAQPIKGAAAYFFRHIFHDWPDNACVTILKQTARAMDKHRSRILICDQVLDDNSPAEASLLYDIDMMSLFGGKERSLAEWKSLIYSAGENLEIVNVLRSPESEAAILDVRLKL</sequence>
<reference key="1">
    <citation type="journal article" date="2015" name="J. Am. Chem. Soc.">
        <title>Tandem prenyltransferases catalyze isoprenoid elongation and complexity generation in biosynthesis of quinolone alkaloids.</title>
        <authorList>
            <person name="Zou Y."/>
            <person name="Zhan Z."/>
            <person name="Li D."/>
            <person name="Tang M."/>
            <person name="Cacho R.A."/>
            <person name="Watanabe K."/>
            <person name="Tang Y."/>
        </authorList>
    </citation>
    <scope>NUCLEOTIDE SEQUENCE [GENOMIC DNA]</scope>
    <scope>FUNCTION</scope>
    <scope>PATHWAY</scope>
    <source>
        <strain>IBT 5891 / CBS 111225</strain>
    </source>
</reference>
<reference key="2">
    <citation type="journal article" date="2017" name="Nat. Chem. Biol.">
        <title>Enzyme-catalyzed cationic epoxide rearrangements in quinolone alkaloid biosynthesis.</title>
        <authorList>
            <person name="Zou Y."/>
            <person name="Garcia-Borras M."/>
            <person name="Tang M.C."/>
            <person name="Hirayama Y."/>
            <person name="Li D.H."/>
            <person name="Li L."/>
            <person name="Watanabe K."/>
            <person name="Houk K.N."/>
            <person name="Tang Y."/>
        </authorList>
    </citation>
    <scope>FUNCTION</scope>
</reference>
<evidence type="ECO:0000250" key="1">
    <source>
        <dbReference type="UniProtKB" id="C8VJQ3"/>
    </source>
</evidence>
<evidence type="ECO:0000250" key="2">
    <source>
        <dbReference type="UniProtKB" id="Q5AR53"/>
    </source>
</evidence>
<evidence type="ECO:0000250" key="3">
    <source>
        <dbReference type="UniProtKB" id="Q5AR54"/>
    </source>
</evidence>
<evidence type="ECO:0000255" key="4">
    <source>
        <dbReference type="PROSITE-ProRule" id="PRU01020"/>
    </source>
</evidence>
<evidence type="ECO:0000269" key="5">
    <source>
    </source>
</evidence>
<evidence type="ECO:0000269" key="6">
    <source>
    </source>
</evidence>
<evidence type="ECO:0000303" key="7">
    <source>
    </source>
</evidence>
<evidence type="ECO:0000305" key="8"/>
<evidence type="ECO:0000305" key="9">
    <source>
    </source>
</evidence>
<dbReference type="EC" id="2.1.1.-" evidence="4"/>
<dbReference type="EMBL" id="KX528209">
    <property type="protein sequence ID" value="ANY57889.1"/>
    <property type="molecule type" value="Genomic_DNA"/>
</dbReference>
<dbReference type="SMR" id="A0A1B2CTC1"/>
<dbReference type="GO" id="GO:0008171">
    <property type="term" value="F:O-methyltransferase activity"/>
    <property type="evidence" value="ECO:0007669"/>
    <property type="project" value="InterPro"/>
</dbReference>
<dbReference type="GO" id="GO:0046983">
    <property type="term" value="F:protein dimerization activity"/>
    <property type="evidence" value="ECO:0007669"/>
    <property type="project" value="InterPro"/>
</dbReference>
<dbReference type="GO" id="GO:0032259">
    <property type="term" value="P:methylation"/>
    <property type="evidence" value="ECO:0007669"/>
    <property type="project" value="UniProtKB-KW"/>
</dbReference>
<dbReference type="GO" id="GO:0044550">
    <property type="term" value="P:secondary metabolite biosynthetic process"/>
    <property type="evidence" value="ECO:0007669"/>
    <property type="project" value="UniProtKB-ARBA"/>
</dbReference>
<dbReference type="Gene3D" id="3.40.50.150">
    <property type="entry name" value="Vaccinia Virus protein VP39"/>
    <property type="match status" value="1"/>
</dbReference>
<dbReference type="Gene3D" id="1.10.10.10">
    <property type="entry name" value="Winged helix-like DNA-binding domain superfamily/Winged helix DNA-binding domain"/>
    <property type="match status" value="1"/>
</dbReference>
<dbReference type="InterPro" id="IPR016461">
    <property type="entry name" value="COMT-like"/>
</dbReference>
<dbReference type="InterPro" id="IPR001077">
    <property type="entry name" value="O_MeTrfase_dom"/>
</dbReference>
<dbReference type="InterPro" id="IPR012967">
    <property type="entry name" value="Plant_O-MeTrfase_dimerisation"/>
</dbReference>
<dbReference type="InterPro" id="IPR029063">
    <property type="entry name" value="SAM-dependent_MTases_sf"/>
</dbReference>
<dbReference type="InterPro" id="IPR036388">
    <property type="entry name" value="WH-like_DNA-bd_sf"/>
</dbReference>
<dbReference type="InterPro" id="IPR036390">
    <property type="entry name" value="WH_DNA-bd_sf"/>
</dbReference>
<dbReference type="PANTHER" id="PTHR43712:SF5">
    <property type="entry name" value="O-METHYLTRANSFERASE ASQN-RELATED"/>
    <property type="match status" value="1"/>
</dbReference>
<dbReference type="PANTHER" id="PTHR43712">
    <property type="entry name" value="PUTATIVE (AFU_ORTHOLOGUE AFUA_4G14580)-RELATED"/>
    <property type="match status" value="1"/>
</dbReference>
<dbReference type="Pfam" id="PF08100">
    <property type="entry name" value="Dimerisation"/>
    <property type="match status" value="1"/>
</dbReference>
<dbReference type="Pfam" id="PF00891">
    <property type="entry name" value="Methyltransf_2"/>
    <property type="match status" value="1"/>
</dbReference>
<dbReference type="SUPFAM" id="SSF53335">
    <property type="entry name" value="S-adenosyl-L-methionine-dependent methyltransferases"/>
    <property type="match status" value="1"/>
</dbReference>
<dbReference type="SUPFAM" id="SSF46785">
    <property type="entry name" value="Winged helix' DNA-binding domain"/>
    <property type="match status" value="1"/>
</dbReference>
<dbReference type="PROSITE" id="PS51683">
    <property type="entry name" value="SAM_OMT_II"/>
    <property type="match status" value="1"/>
</dbReference>
<keyword id="KW-0489">Methyltransferase</keyword>
<keyword id="KW-0949">S-adenosyl-L-methionine</keyword>
<keyword id="KW-0808">Transferase</keyword>
<protein>
    <recommendedName>
        <fullName>O-methyltransferase penK</fullName>
        <ecNumber evidence="4">2.1.1.-</ecNumber>
    </recommendedName>
    <alternativeName>
        <fullName evidence="7">Penigequinolones biosynthesis cluster protein K</fullName>
    </alternativeName>
</protein>
<name>PENK_PENTH</name>
<feature type="chain" id="PRO_0000455364" description="O-methyltransferase penK">
    <location>
        <begin position="1"/>
        <end position="420"/>
    </location>
</feature>
<feature type="active site" description="Proton acceptor" evidence="4">
    <location>
        <position position="325"/>
    </location>
</feature>
<feature type="binding site" evidence="4">
    <location>
        <position position="285"/>
    </location>
    <ligand>
        <name>S-adenosyl-L-methionine</name>
        <dbReference type="ChEBI" id="CHEBI:59789"/>
    </ligand>
</feature>
<proteinExistence type="inferred from homology"/>
<comment type="function">
    <text evidence="1 2 3 5 6 9">O-methyltransferase; part of the gene cluster that mediates the biosynthesis of penigequinolones, potent insecticidal alkaloids that contain a highly modified 10-carbon prenyl group (PubMed:25859931). The first stage is catalyzed by the nonribosomal peptide synthetase penN that condenses anthranilic acid and O-methyl-L-tyrosine to produce 4'-methoxycyclopeptin (By similarity). 4'-methoxycyclopeptin is then converted to 4'-methoxydehydrocyclopeptin by the ketoglutarate-dependent dioxygenase penM through dehydrogenation to form a double bond between C-alpha and C-beta of the O-methyltyrosine side chain (By similarity). PenM also converts its first product methoxydehydrocyclopeptin to 4'-methoxycyclopenin (By similarity). The following conversion of 4'methoxycyclopenin into 4'-methoxyviridicatin is catalyzed by the cyclopenase penL (By similarity). 4'-methoxyviridicatin is the precursor of quinolone natural products, and is further converted to quinolinone B (Probable). The prenyltransferase penI then catalyzes the canonical Friedel-Crafts alkylation of quinolinone B with dimethylallyl cation to yield dimethylallyl quinolone, which is subjected to FAD-dependent dehydrogenation by the FAD-linked oxidoreductase penH to yield conjugated aryl diene (PubMed:25859931). The delta(3') double bond then serves as the site of the second alkylation with DMAPP catalyzed by the prenyltransferase penG to yield a carbenium ion intermediate, which can be attacked by H(2)O to yield a styrenyl quinolone containing a C3'-hydroxyprenyl chain, or undergo cyclization to yield yaequinolones J1 and J2 (PubMed:25859931). The conversion of the styrenyl quinolone into the tetrahydrofuran-containing yaequinolone C is performed by the FAD-dependent monooxygenase penE and involves epoxidation of the terminal C7'-C8' olefin, followed by epoxide ring opening initiated by the C3' hydroxyl group (PubMed:25859931). The predicted cysteine hydrolase penJ acts as an epoxide hydrolase that enhances the rate of the 5-exo-tet cyclization step, increasing the yield of yaequinolone C (PubMed:25859931, PubMed:28114276). PenF catalyzes the cationic rearrangement of the epoxide formed by penE (before ring opening to produce yaequinolone C) into yaequinolone D (PubMed:28114276). Finally, the short-chain dehydrogenase/reductase (SDR)-like reductase penD, catalyzes both the dehydration of yaequinolone D and the reduction of the resulting oxonium to yield penigequinolone (PubMed:28114276).</text>
</comment>
<comment type="pathway">
    <text evidence="9">Secondary metabolite biosynthesis.</text>
</comment>
<comment type="pathway">
    <text evidence="9">Alkaloid biosynthesis.</text>
</comment>
<comment type="pathway">
    <text evidence="9">Mycotoxin biosynthesis.</text>
</comment>
<comment type="similarity">
    <text evidence="8">Belongs to the class I-like SAM-binding methyltransferase superfamily. Cation-independent O-methyltransferase family.</text>
</comment>
<accession>A0A1B2CTC1</accession>
<organism>
    <name type="scientific">Penicillium thymicola</name>
    <dbReference type="NCBI Taxonomy" id="293382"/>
    <lineage>
        <taxon>Eukaryota</taxon>
        <taxon>Fungi</taxon>
        <taxon>Dikarya</taxon>
        <taxon>Ascomycota</taxon>
        <taxon>Pezizomycotina</taxon>
        <taxon>Eurotiomycetes</taxon>
        <taxon>Eurotiomycetidae</taxon>
        <taxon>Eurotiales</taxon>
        <taxon>Aspergillaceae</taxon>
        <taxon>Penicillium</taxon>
    </lineage>
</organism>